<evidence type="ECO:0000250" key="1"/>
<evidence type="ECO:0000305" key="2"/>
<feature type="chain" id="PRO_0000332703" description="Transcriptional repressor RcnR">
    <location>
        <begin position="1"/>
        <end position="90"/>
    </location>
</feature>
<comment type="function">
    <text evidence="1">Repressor of rcnA expression. Acts by binding specifically to the rcnA promoter in the absence of nickel and cobalt. In the presence of one of these metals, it has a weaker affinity for rcnA promoter (By similarity).</text>
</comment>
<comment type="subcellular location">
    <subcellularLocation>
        <location evidence="2">Cytoplasm</location>
    </subcellularLocation>
</comment>
<comment type="similarity">
    <text evidence="2">Belongs to the FrmR/RcnR family.</text>
</comment>
<accession>Q7CPV3</accession>
<keyword id="KW-0963">Cytoplasm</keyword>
<keyword id="KW-0238">DNA-binding</keyword>
<keyword id="KW-1185">Reference proteome</keyword>
<keyword id="KW-0678">Repressor</keyword>
<keyword id="KW-0804">Transcription</keyword>
<keyword id="KW-0805">Transcription regulation</keyword>
<protein>
    <recommendedName>
        <fullName>Transcriptional repressor RcnR</fullName>
    </recommendedName>
</protein>
<organism>
    <name type="scientific">Salmonella typhimurium (strain LT2 / SGSC1412 / ATCC 700720)</name>
    <dbReference type="NCBI Taxonomy" id="99287"/>
    <lineage>
        <taxon>Bacteria</taxon>
        <taxon>Pseudomonadati</taxon>
        <taxon>Pseudomonadota</taxon>
        <taxon>Gammaproteobacteria</taxon>
        <taxon>Enterobacterales</taxon>
        <taxon>Enterobacteriaceae</taxon>
        <taxon>Salmonella</taxon>
    </lineage>
</organism>
<proteinExistence type="inferred from homology"/>
<sequence>MSHTIRDKQKLKARTSKIQGQVIALKKMLDEPHECAAVLQQIAAIRGAVNGLMREVIKGHLTEHIVHQSDEARREEDLDVILKVLDSYIK</sequence>
<dbReference type="EMBL" id="AE006468">
    <property type="protein sequence ID" value="AAL21899.1"/>
    <property type="molecule type" value="Genomic_DNA"/>
</dbReference>
<dbReference type="RefSeq" id="WP_000019953.1">
    <property type="nucleotide sequence ID" value="NC_003197.2"/>
</dbReference>
<dbReference type="SMR" id="Q7CPV3"/>
<dbReference type="STRING" id="99287.STM3023"/>
<dbReference type="PaxDb" id="99287-STM3023"/>
<dbReference type="KEGG" id="stm:STM3023"/>
<dbReference type="PATRIC" id="fig|99287.12.peg.3199"/>
<dbReference type="HOGENOM" id="CLU_130332_3_0_6"/>
<dbReference type="OMA" id="EHLTECI"/>
<dbReference type="PhylomeDB" id="Q7CPV3"/>
<dbReference type="BioCyc" id="SENT99287:STM3023-MONOMER"/>
<dbReference type="Proteomes" id="UP000001014">
    <property type="component" value="Chromosome"/>
</dbReference>
<dbReference type="GO" id="GO:0005737">
    <property type="term" value="C:cytoplasm"/>
    <property type="evidence" value="ECO:0007669"/>
    <property type="project" value="UniProtKB-SubCell"/>
</dbReference>
<dbReference type="GO" id="GO:0032993">
    <property type="term" value="C:protein-DNA complex"/>
    <property type="evidence" value="ECO:0000318"/>
    <property type="project" value="GO_Central"/>
</dbReference>
<dbReference type="GO" id="GO:0001217">
    <property type="term" value="F:DNA-binding transcription repressor activity"/>
    <property type="evidence" value="ECO:0000318"/>
    <property type="project" value="GO_Central"/>
</dbReference>
<dbReference type="GO" id="GO:0046872">
    <property type="term" value="F:metal ion binding"/>
    <property type="evidence" value="ECO:0007669"/>
    <property type="project" value="InterPro"/>
</dbReference>
<dbReference type="GO" id="GO:0000976">
    <property type="term" value="F:transcription cis-regulatory region binding"/>
    <property type="evidence" value="ECO:0000318"/>
    <property type="project" value="GO_Central"/>
</dbReference>
<dbReference type="GO" id="GO:0045892">
    <property type="term" value="P:negative regulation of DNA-templated transcription"/>
    <property type="evidence" value="ECO:0000318"/>
    <property type="project" value="GO_Central"/>
</dbReference>
<dbReference type="CDD" id="cd10153">
    <property type="entry name" value="RcnR-FrmR-like_DUF156"/>
    <property type="match status" value="1"/>
</dbReference>
<dbReference type="FunFam" id="1.20.58.1000:FF:000001">
    <property type="entry name" value="Transcriptional repressor RcnR"/>
    <property type="match status" value="1"/>
</dbReference>
<dbReference type="Gene3D" id="1.20.58.1000">
    <property type="entry name" value="Metal-sensitive repressor, helix protomer"/>
    <property type="match status" value="1"/>
</dbReference>
<dbReference type="InterPro" id="IPR003735">
    <property type="entry name" value="Metal_Tscrpt_repr"/>
</dbReference>
<dbReference type="InterPro" id="IPR038390">
    <property type="entry name" value="Metal_Tscrpt_repr_sf"/>
</dbReference>
<dbReference type="NCBIfam" id="NF011613">
    <property type="entry name" value="PRK15039.1"/>
    <property type="match status" value="1"/>
</dbReference>
<dbReference type="PANTHER" id="PTHR33677">
    <property type="entry name" value="TRANSCRIPTIONAL REPRESSOR FRMR-RELATED"/>
    <property type="match status" value="1"/>
</dbReference>
<dbReference type="PANTHER" id="PTHR33677:SF1">
    <property type="entry name" value="TRANSCRIPTIONAL REPRESSOR RCNR"/>
    <property type="match status" value="1"/>
</dbReference>
<dbReference type="Pfam" id="PF02583">
    <property type="entry name" value="Trns_repr_metal"/>
    <property type="match status" value="1"/>
</dbReference>
<reference key="1">
    <citation type="journal article" date="2001" name="Nature">
        <title>Complete genome sequence of Salmonella enterica serovar Typhimurium LT2.</title>
        <authorList>
            <person name="McClelland M."/>
            <person name="Sanderson K.E."/>
            <person name="Spieth J."/>
            <person name="Clifton S.W."/>
            <person name="Latreille P."/>
            <person name="Courtney L."/>
            <person name="Porwollik S."/>
            <person name="Ali J."/>
            <person name="Dante M."/>
            <person name="Du F."/>
            <person name="Hou S."/>
            <person name="Layman D."/>
            <person name="Leonard S."/>
            <person name="Nguyen C."/>
            <person name="Scott K."/>
            <person name="Holmes A."/>
            <person name="Grewal N."/>
            <person name="Mulvaney E."/>
            <person name="Ryan E."/>
            <person name="Sun H."/>
            <person name="Florea L."/>
            <person name="Miller W."/>
            <person name="Stoneking T."/>
            <person name="Nhan M."/>
            <person name="Waterston R."/>
            <person name="Wilson R.K."/>
        </authorList>
    </citation>
    <scope>NUCLEOTIDE SEQUENCE [LARGE SCALE GENOMIC DNA]</scope>
    <source>
        <strain>LT2 / SGSC1412 / ATCC 700720</strain>
    </source>
</reference>
<name>RCNR_SALTY</name>
<gene>
    <name type="primary">rcnR</name>
    <name type="ordered locus">STM3023</name>
</gene>